<evidence type="ECO:0000256" key="1">
    <source>
        <dbReference type="SAM" id="MobiDB-lite"/>
    </source>
</evidence>
<evidence type="ECO:0000269" key="2">
    <source>
    </source>
</evidence>
<evidence type="ECO:0000269" key="3">
    <source>
    </source>
</evidence>
<evidence type="ECO:0000269" key="4">
    <source>
    </source>
</evidence>
<evidence type="ECO:0000269" key="5">
    <source>
    </source>
</evidence>
<evidence type="ECO:0000269" key="6">
    <source>
    </source>
</evidence>
<evidence type="ECO:0000305" key="7"/>
<dbReference type="EMBL" id="X82036">
    <property type="protein sequence ID" value="CAA57556.1"/>
    <property type="molecule type" value="mRNA"/>
</dbReference>
<dbReference type="EMBL" id="CM000131">
    <property type="status" value="NOT_ANNOTATED_CDS"/>
    <property type="molecule type" value="Genomic_DNA"/>
</dbReference>
<dbReference type="PIR" id="T03675">
    <property type="entry name" value="T03675"/>
</dbReference>
<dbReference type="SMR" id="A2YH60"/>
<dbReference type="STRING" id="39946.A2YH60"/>
<dbReference type="EnsemblPlants" id="OsLaMu_06g0029500.01">
    <property type="protein sequence ID" value="OsLaMu_06g0029500.01"/>
    <property type="gene ID" value="OsLaMu_06g0029500"/>
</dbReference>
<dbReference type="Gramene" id="OsLaMu_06g0029500.01">
    <property type="protein sequence ID" value="OsLaMu_06g0029500.01"/>
    <property type="gene ID" value="OsLaMu_06g0029500"/>
</dbReference>
<dbReference type="Proteomes" id="UP000007015">
    <property type="component" value="Chromosome 6"/>
</dbReference>
<dbReference type="GO" id="GO:0005634">
    <property type="term" value="C:nucleus"/>
    <property type="evidence" value="ECO:0007669"/>
    <property type="project" value="UniProtKB-SubCell"/>
</dbReference>
<dbReference type="GO" id="GO:0016538">
    <property type="term" value="F:cyclin-dependent protein serine/threonine kinase regulator activity"/>
    <property type="evidence" value="ECO:0007669"/>
    <property type="project" value="InterPro"/>
</dbReference>
<dbReference type="GO" id="GO:0051301">
    <property type="term" value="P:cell division"/>
    <property type="evidence" value="ECO:0007669"/>
    <property type="project" value="UniProtKB-KW"/>
</dbReference>
<dbReference type="GO" id="GO:0044772">
    <property type="term" value="P:mitotic cell cycle phase transition"/>
    <property type="evidence" value="ECO:0007669"/>
    <property type="project" value="InterPro"/>
</dbReference>
<dbReference type="CDD" id="cd20567">
    <property type="entry name" value="CYCLIN_AtCycB-like_rpt1"/>
    <property type="match status" value="1"/>
</dbReference>
<dbReference type="CDD" id="cd20511">
    <property type="entry name" value="CYCLIN_AtCycB-like_rpt2"/>
    <property type="match status" value="1"/>
</dbReference>
<dbReference type="FunFam" id="1.10.472.10:FF:000032">
    <property type="entry name" value="G2/mitotic-specific cyclin-1"/>
    <property type="match status" value="1"/>
</dbReference>
<dbReference type="Gene3D" id="1.10.472.10">
    <property type="entry name" value="Cyclin-like"/>
    <property type="match status" value="2"/>
</dbReference>
<dbReference type="InterPro" id="IPR039361">
    <property type="entry name" value="Cyclin"/>
</dbReference>
<dbReference type="InterPro" id="IPR013763">
    <property type="entry name" value="Cyclin-like_dom"/>
</dbReference>
<dbReference type="InterPro" id="IPR036915">
    <property type="entry name" value="Cyclin-like_sf"/>
</dbReference>
<dbReference type="InterPro" id="IPR046965">
    <property type="entry name" value="Cyclin_A/B-like"/>
</dbReference>
<dbReference type="InterPro" id="IPR004367">
    <property type="entry name" value="Cyclin_C-dom"/>
</dbReference>
<dbReference type="InterPro" id="IPR006671">
    <property type="entry name" value="Cyclin_N"/>
</dbReference>
<dbReference type="InterPro" id="IPR048258">
    <property type="entry name" value="Cyclins_cyclin-box"/>
</dbReference>
<dbReference type="PANTHER" id="PTHR10177">
    <property type="entry name" value="CYCLINS"/>
    <property type="match status" value="1"/>
</dbReference>
<dbReference type="Pfam" id="PF02984">
    <property type="entry name" value="Cyclin_C"/>
    <property type="match status" value="1"/>
</dbReference>
<dbReference type="Pfam" id="PF00134">
    <property type="entry name" value="Cyclin_N"/>
    <property type="match status" value="1"/>
</dbReference>
<dbReference type="PIRSF" id="PIRSF001771">
    <property type="entry name" value="Cyclin_A_B_D_E"/>
    <property type="match status" value="1"/>
</dbReference>
<dbReference type="SMART" id="SM00385">
    <property type="entry name" value="CYCLIN"/>
    <property type="match status" value="2"/>
</dbReference>
<dbReference type="SMART" id="SM01332">
    <property type="entry name" value="Cyclin_C"/>
    <property type="match status" value="1"/>
</dbReference>
<dbReference type="SUPFAM" id="SSF47954">
    <property type="entry name" value="Cyclin-like"/>
    <property type="match status" value="2"/>
</dbReference>
<dbReference type="PROSITE" id="PS00292">
    <property type="entry name" value="CYCLINS"/>
    <property type="match status" value="1"/>
</dbReference>
<organism>
    <name type="scientific">Oryza sativa subsp. indica</name>
    <name type="common">Rice</name>
    <dbReference type="NCBI Taxonomy" id="39946"/>
    <lineage>
        <taxon>Eukaryota</taxon>
        <taxon>Viridiplantae</taxon>
        <taxon>Streptophyta</taxon>
        <taxon>Embryophyta</taxon>
        <taxon>Tracheophyta</taxon>
        <taxon>Spermatophyta</taxon>
        <taxon>Magnoliopsida</taxon>
        <taxon>Liliopsida</taxon>
        <taxon>Poales</taxon>
        <taxon>Poaceae</taxon>
        <taxon>BOP clade</taxon>
        <taxon>Oryzoideae</taxon>
        <taxon>Oryzeae</taxon>
        <taxon>Oryzinae</taxon>
        <taxon>Oryza</taxon>
        <taxon>Oryza sativa</taxon>
    </lineage>
</organism>
<reference key="1">
    <citation type="journal article" date="1995" name="Plant J.">
        <title>Gibberellin promotes histone H1 kinase activity and the expression of cdc2 and cyclin genes during the induction of rapid growth in deepwater rice internodes.</title>
        <authorList>
            <person name="Sauter M."/>
            <person name="Mekhedov S.L."/>
            <person name="Kende H."/>
        </authorList>
    </citation>
    <scope>NUCLEOTIDE SEQUENCE [MRNA]</scope>
    <scope>TISSUE SPECIFICITY</scope>
    <scope>INDUCTION</scope>
    <source>
        <strain>cv. Pin Gaew 53</strain>
        <tissue>Internode</tissue>
    </source>
</reference>
<reference key="2">
    <citation type="online journal article" date="1997" name="Plant Gene Register">
        <title>Isolation and characterization of a cDNA encoding a mitotic cyclin of the CycB2 type from rice.</title>
        <authorList>
            <person name="Sauter M."/>
        </authorList>
        <locator>PGR97-001</locator>
    </citation>
    <scope>NUCLEOTIDE SEQUENCE [MRNA]</scope>
    <source>
        <strain>cv. Pin Gaew 53</strain>
    </source>
</reference>
<reference key="3">
    <citation type="journal article" date="2005" name="PLoS Biol.">
        <title>The genomes of Oryza sativa: a history of duplications.</title>
        <authorList>
            <person name="Yu J."/>
            <person name="Wang J."/>
            <person name="Lin W."/>
            <person name="Li S."/>
            <person name="Li H."/>
            <person name="Zhou J."/>
            <person name="Ni P."/>
            <person name="Dong W."/>
            <person name="Hu S."/>
            <person name="Zeng C."/>
            <person name="Zhang J."/>
            <person name="Zhang Y."/>
            <person name="Li R."/>
            <person name="Xu Z."/>
            <person name="Li S."/>
            <person name="Li X."/>
            <person name="Zheng H."/>
            <person name="Cong L."/>
            <person name="Lin L."/>
            <person name="Yin J."/>
            <person name="Geng J."/>
            <person name="Li G."/>
            <person name="Shi J."/>
            <person name="Liu J."/>
            <person name="Lv H."/>
            <person name="Li J."/>
            <person name="Wang J."/>
            <person name="Deng Y."/>
            <person name="Ran L."/>
            <person name="Shi X."/>
            <person name="Wang X."/>
            <person name="Wu Q."/>
            <person name="Li C."/>
            <person name="Ren X."/>
            <person name="Wang J."/>
            <person name="Wang X."/>
            <person name="Li D."/>
            <person name="Liu D."/>
            <person name="Zhang X."/>
            <person name="Ji Z."/>
            <person name="Zhao W."/>
            <person name="Sun Y."/>
            <person name="Zhang Z."/>
            <person name="Bao J."/>
            <person name="Han Y."/>
            <person name="Dong L."/>
            <person name="Ji J."/>
            <person name="Chen P."/>
            <person name="Wu S."/>
            <person name="Liu J."/>
            <person name="Xiao Y."/>
            <person name="Bu D."/>
            <person name="Tan J."/>
            <person name="Yang L."/>
            <person name="Ye C."/>
            <person name="Zhang J."/>
            <person name="Xu J."/>
            <person name="Zhou Y."/>
            <person name="Yu Y."/>
            <person name="Zhang B."/>
            <person name="Zhuang S."/>
            <person name="Wei H."/>
            <person name="Liu B."/>
            <person name="Lei M."/>
            <person name="Yu H."/>
            <person name="Li Y."/>
            <person name="Xu H."/>
            <person name="Wei S."/>
            <person name="He X."/>
            <person name="Fang L."/>
            <person name="Zhang Z."/>
            <person name="Zhang Y."/>
            <person name="Huang X."/>
            <person name="Su Z."/>
            <person name="Tong W."/>
            <person name="Li J."/>
            <person name="Tong Z."/>
            <person name="Li S."/>
            <person name="Ye J."/>
            <person name="Wang L."/>
            <person name="Fang L."/>
            <person name="Lei T."/>
            <person name="Chen C.-S."/>
            <person name="Chen H.-C."/>
            <person name="Xu Z."/>
            <person name="Li H."/>
            <person name="Huang H."/>
            <person name="Zhang F."/>
            <person name="Xu H."/>
            <person name="Li N."/>
            <person name="Zhao C."/>
            <person name="Li S."/>
            <person name="Dong L."/>
            <person name="Huang Y."/>
            <person name="Li L."/>
            <person name="Xi Y."/>
            <person name="Qi Q."/>
            <person name="Li W."/>
            <person name="Zhang B."/>
            <person name="Hu W."/>
            <person name="Zhang Y."/>
            <person name="Tian X."/>
            <person name="Jiao Y."/>
            <person name="Liang X."/>
            <person name="Jin J."/>
            <person name="Gao L."/>
            <person name="Zheng W."/>
            <person name="Hao B."/>
            <person name="Liu S.-M."/>
            <person name="Wang W."/>
            <person name="Yuan L."/>
            <person name="Cao M."/>
            <person name="McDermott J."/>
            <person name="Samudrala R."/>
            <person name="Wang J."/>
            <person name="Wong G.K.-S."/>
            <person name="Yang H."/>
        </authorList>
    </citation>
    <scope>NUCLEOTIDE SEQUENCE [LARGE SCALE GENOMIC DNA]</scope>
    <source>
        <strain>cv. 93-11</strain>
    </source>
</reference>
<reference key="4">
    <citation type="journal article" date="1997" name="Plant J.">
        <title>Differential expression of a CAK (cdc2-activating kinase)-like protein kinase, cyclins and cdc2 genes from rice during the cell cycle and in response to gibberellin.</title>
        <authorList>
            <person name="Sauter M."/>
        </authorList>
    </citation>
    <scope>DEVELOPMENTAL STAGE</scope>
</reference>
<reference key="5">
    <citation type="journal article" date="1999" name="Mol. Gen. Genet.">
        <title>Molecular characterization of mitotic cyclins in rice plants.</title>
        <authorList>
            <person name="Umeda M."/>
            <person name="Iwamoto N."/>
            <person name="Umeda-Hara C."/>
            <person name="Yamaguchi M."/>
            <person name="Hashimoto J."/>
            <person name="Uchimiya H."/>
        </authorList>
    </citation>
    <scope>FUNCTION</scope>
    <scope>TISSUE SPECIFICITY</scope>
</reference>
<reference key="6">
    <citation type="journal article" date="1999" name="Plant Physiol.">
        <title>Adventitious root growth and cell-cycle induction in deepwater rice.</title>
        <authorList>
            <person name="Lorbiecke R."/>
            <person name="Sauter M."/>
        </authorList>
    </citation>
    <scope>TISSUE SPECIFICITY</scope>
    <scope>DEVELOPMENTAL STAGE</scope>
    <scope>INDUCTION</scope>
</reference>
<reference key="7">
    <citation type="journal article" date="2003" name="Plant J.">
        <title>Cell cycle function of a rice B2-type cyclin interacting with a B-type cyclin-dependent kinase.</title>
        <authorList>
            <person name="Lee J."/>
            <person name="Das A."/>
            <person name="Yamaguchi M."/>
            <person name="Hashimoto J."/>
            <person name="Tsutsumi N."/>
            <person name="Uchimiya H."/>
            <person name="Umeda M."/>
        </authorList>
    </citation>
    <scope>FUNCTION</scope>
    <scope>SUBCELLULAR LOCATION</scope>
    <scope>DEVELOPMENTAL STAGE</scope>
    <scope>INTERACTION WITH CDKB2-1</scope>
</reference>
<comment type="function">
    <text evidence="2 3">Involved in the control of the cell cycle at the G2/M (mitosis) transition. May associate to CDKB2-1 and activate CDKB2-1 kinase to promote cell division.</text>
</comment>
<comment type="subunit">
    <text evidence="3">Interacts with CDKB2-1.</text>
</comment>
<comment type="subcellular location">
    <subcellularLocation>
        <location evidence="3">Nucleus</location>
    </subcellularLocation>
    <text>Expressed during interphase, prophase, metaphase and disappears at anaphase and telophase.</text>
</comment>
<comment type="tissue specificity">
    <text evidence="2 4 6">Expressed in the intercalary meristem and the elongation zone of internodes. Expressed in adventitious roots at all nodes under submergence conditions.</text>
</comment>
<comment type="developmental stage">
    <text evidence="3 5 6">Expressed in the G2/M phases and disappears at the anaphase of mitosis.</text>
</comment>
<comment type="induction">
    <text evidence="4 6">By gibberellic acid (GA3) and submergence.</text>
</comment>
<comment type="miscellaneous">
    <text>May be involved in rapid internodal growth of indica deepwater rice under submergence.</text>
</comment>
<comment type="similarity">
    <text evidence="7">Belongs to the cyclin family. Cyclin AB subfamily.</text>
</comment>
<proteinExistence type="evidence at protein level"/>
<protein>
    <recommendedName>
        <fullName>Cyclin-B2-2</fullName>
    </recommendedName>
    <alternativeName>
        <fullName>CycOs2</fullName>
    </alternativeName>
    <alternativeName>
        <fullName>G2/mitotic-specific cyclin-B2-2</fullName>
        <shortName>CycB2;2</shortName>
    </alternativeName>
</protein>
<feature type="chain" id="PRO_0000292942" description="Cyclin-B2-2">
    <location>
        <begin position="1"/>
        <end position="419"/>
    </location>
</feature>
<feature type="region of interest" description="Disordered" evidence="1">
    <location>
        <begin position="79"/>
        <end position="116"/>
    </location>
</feature>
<feature type="sequence conflict" description="In Ref. 1; CAA57556." evidence="7" ref="1">
    <original>A</original>
    <variation>S</variation>
    <location>
        <position position="63"/>
    </location>
</feature>
<feature type="sequence conflict" description="In Ref. 1; CAA57556." evidence="7" ref="1">
    <original>S</original>
    <variation>I</variation>
    <location>
        <position position="82"/>
    </location>
</feature>
<feature type="sequence conflict" description="In Ref. 1; CAA57556." evidence="7" ref="1">
    <original>A</original>
    <variation>P</variation>
    <location>
        <position position="404"/>
    </location>
</feature>
<gene>
    <name type="primary">CYCB2-2</name>
    <name type="synonym">CYCOS2</name>
    <name type="ORF">OsI_023653</name>
</gene>
<sequence>MENMRSENFNQGVSMEGVKHAPEMANTNRRALRDIKNIIGAPHQHMAVSKRGLLDKPAAKNQAGHRPMTRKFAATLANQPSSAPLAPIGSERQKRTADSAFHGPADMECTKITSDDLPLPMMSEMDEVMGSELKEIEMEDIEEAAPDIDSCDANNSLAVVEYVDEIYSFYRRSEGLSCVSPNYMLSQNDINEKMRGILIDWLIEVHYKLELLDETLFLTVNIIDRFLARENVVRKKLQLVGVTAMLLACKYEEVSVPVVEDLILICDRAYTRTDILEMERMIVNTLQFDMSVPTPYCFMRRFLKAAQSDKKLELMSFFIIELSLVEYEMLKFQPSMLAAAAIYTAQCTINGFKSWNKCCELHTKYSEEQLMECSKMMVELHQKAGHGKLTGVHRKYSTFRYGCAAKSEPAVFLLKSVAL</sequence>
<name>CCB22_ORYSI</name>
<keyword id="KW-0131">Cell cycle</keyword>
<keyword id="KW-0132">Cell division</keyword>
<keyword id="KW-0195">Cyclin</keyword>
<keyword id="KW-0498">Mitosis</keyword>
<keyword id="KW-0539">Nucleus</keyword>
<keyword id="KW-1185">Reference proteome</keyword>
<accession>A2YH60</accession>
<accession>Q40671</accession>
<accession>Q5Z7P8</accession>